<organism>
    <name type="scientific">Prochlorococcus marinus (strain SARG / CCMP1375 / SS120)</name>
    <dbReference type="NCBI Taxonomy" id="167539"/>
    <lineage>
        <taxon>Bacteria</taxon>
        <taxon>Bacillati</taxon>
        <taxon>Cyanobacteriota</taxon>
        <taxon>Cyanophyceae</taxon>
        <taxon>Synechococcales</taxon>
        <taxon>Prochlorococcaceae</taxon>
        <taxon>Prochlorococcus</taxon>
    </lineage>
</organism>
<sequence>MSYSRVLLKLSGEALMGSKPYGIDPEIVQSIAQDVSKVVQEGTQLAIVVGGGNIFRGLKGSSAGMDRATADYVGMLATVMNAITLQDGLERAGVETRVQTAIEMQQIAEPYIRRRAIRHLEKGRVVVFGGGCGNPFFTTDTTSALRAAEINADVIFKATKVDGVYNQDPKEYPEAIKYESLTFQEVLSKEIAVMDSTAIALCKDNKIPIVVFNIFQPGNINKAVAGEKIGSRISNSG</sequence>
<reference key="1">
    <citation type="journal article" date="2003" name="Proc. Natl. Acad. Sci. U.S.A.">
        <title>Genome sequence of the cyanobacterium Prochlorococcus marinus SS120, a nearly minimal oxyphototrophic genome.</title>
        <authorList>
            <person name="Dufresne A."/>
            <person name="Salanoubat M."/>
            <person name="Partensky F."/>
            <person name="Artiguenave F."/>
            <person name="Axmann I.M."/>
            <person name="Barbe V."/>
            <person name="Duprat S."/>
            <person name="Galperin M.Y."/>
            <person name="Koonin E.V."/>
            <person name="Le Gall F."/>
            <person name="Makarova K.S."/>
            <person name="Ostrowski M."/>
            <person name="Oztas S."/>
            <person name="Robert C."/>
            <person name="Rogozin I.B."/>
            <person name="Scanlan D.J."/>
            <person name="Tandeau de Marsac N."/>
            <person name="Weissenbach J."/>
            <person name="Wincker P."/>
            <person name="Wolf Y.I."/>
            <person name="Hess W.R."/>
        </authorList>
    </citation>
    <scope>NUCLEOTIDE SEQUENCE [LARGE SCALE GENOMIC DNA]</scope>
    <source>
        <strain>SARG / CCMP1375 / SS120</strain>
    </source>
</reference>
<keyword id="KW-0067">ATP-binding</keyword>
<keyword id="KW-0963">Cytoplasm</keyword>
<keyword id="KW-0418">Kinase</keyword>
<keyword id="KW-0547">Nucleotide-binding</keyword>
<keyword id="KW-0665">Pyrimidine biosynthesis</keyword>
<keyword id="KW-1185">Reference proteome</keyword>
<keyword id="KW-0808">Transferase</keyword>
<protein>
    <recommendedName>
        <fullName evidence="1">Uridylate kinase</fullName>
        <shortName evidence="1">UK</shortName>
        <ecNumber evidence="1">2.7.4.22</ecNumber>
    </recommendedName>
    <alternativeName>
        <fullName evidence="1">Uridine monophosphate kinase</fullName>
        <shortName evidence="1">UMP kinase</shortName>
        <shortName evidence="1">UMPK</shortName>
    </alternativeName>
</protein>
<proteinExistence type="inferred from homology"/>
<evidence type="ECO:0000255" key="1">
    <source>
        <dbReference type="HAMAP-Rule" id="MF_01220"/>
    </source>
</evidence>
<dbReference type="EC" id="2.7.4.22" evidence="1"/>
<dbReference type="EMBL" id="AE017126">
    <property type="protein sequence ID" value="AAP99567.1"/>
    <property type="molecule type" value="Genomic_DNA"/>
</dbReference>
<dbReference type="RefSeq" id="NP_874915.1">
    <property type="nucleotide sequence ID" value="NC_005042.1"/>
</dbReference>
<dbReference type="RefSeq" id="WP_011124676.1">
    <property type="nucleotide sequence ID" value="NC_005042.1"/>
</dbReference>
<dbReference type="SMR" id="Q7VD61"/>
<dbReference type="STRING" id="167539.Pro_0522"/>
<dbReference type="EnsemblBacteria" id="AAP99567">
    <property type="protein sequence ID" value="AAP99567"/>
    <property type="gene ID" value="Pro_0522"/>
</dbReference>
<dbReference type="KEGG" id="pma:Pro_0522"/>
<dbReference type="PATRIC" id="fig|167539.5.peg.536"/>
<dbReference type="eggNOG" id="COG0528">
    <property type="taxonomic scope" value="Bacteria"/>
</dbReference>
<dbReference type="HOGENOM" id="CLU_033861_0_0_3"/>
<dbReference type="OrthoDB" id="9807458at2"/>
<dbReference type="UniPathway" id="UPA00159">
    <property type="reaction ID" value="UER00275"/>
</dbReference>
<dbReference type="Proteomes" id="UP000001420">
    <property type="component" value="Chromosome"/>
</dbReference>
<dbReference type="GO" id="GO:0005737">
    <property type="term" value="C:cytoplasm"/>
    <property type="evidence" value="ECO:0007669"/>
    <property type="project" value="UniProtKB-SubCell"/>
</dbReference>
<dbReference type="GO" id="GO:0005524">
    <property type="term" value="F:ATP binding"/>
    <property type="evidence" value="ECO:0007669"/>
    <property type="project" value="UniProtKB-KW"/>
</dbReference>
<dbReference type="GO" id="GO:0033862">
    <property type="term" value="F:UMP kinase activity"/>
    <property type="evidence" value="ECO:0007669"/>
    <property type="project" value="UniProtKB-EC"/>
</dbReference>
<dbReference type="GO" id="GO:0044210">
    <property type="term" value="P:'de novo' CTP biosynthetic process"/>
    <property type="evidence" value="ECO:0007669"/>
    <property type="project" value="UniProtKB-UniRule"/>
</dbReference>
<dbReference type="GO" id="GO:0006225">
    <property type="term" value="P:UDP biosynthetic process"/>
    <property type="evidence" value="ECO:0007669"/>
    <property type="project" value="TreeGrafter"/>
</dbReference>
<dbReference type="CDD" id="cd04254">
    <property type="entry name" value="AAK_UMPK-PyrH-Ec"/>
    <property type="match status" value="1"/>
</dbReference>
<dbReference type="FunFam" id="3.40.1160.10:FF:000001">
    <property type="entry name" value="Uridylate kinase"/>
    <property type="match status" value="1"/>
</dbReference>
<dbReference type="Gene3D" id="3.40.1160.10">
    <property type="entry name" value="Acetylglutamate kinase-like"/>
    <property type="match status" value="1"/>
</dbReference>
<dbReference type="HAMAP" id="MF_01220_B">
    <property type="entry name" value="PyrH_B"/>
    <property type="match status" value="1"/>
</dbReference>
<dbReference type="InterPro" id="IPR036393">
    <property type="entry name" value="AceGlu_kinase-like_sf"/>
</dbReference>
<dbReference type="InterPro" id="IPR001048">
    <property type="entry name" value="Asp/Glu/Uridylate_kinase"/>
</dbReference>
<dbReference type="InterPro" id="IPR011817">
    <property type="entry name" value="Uridylate_kinase"/>
</dbReference>
<dbReference type="InterPro" id="IPR015963">
    <property type="entry name" value="Uridylate_kinase_bac"/>
</dbReference>
<dbReference type="NCBIfam" id="TIGR02075">
    <property type="entry name" value="pyrH_bact"/>
    <property type="match status" value="1"/>
</dbReference>
<dbReference type="PANTHER" id="PTHR42833">
    <property type="entry name" value="URIDYLATE KINASE"/>
    <property type="match status" value="1"/>
</dbReference>
<dbReference type="PANTHER" id="PTHR42833:SF4">
    <property type="entry name" value="URIDYLATE KINASE PUMPKIN, CHLOROPLASTIC"/>
    <property type="match status" value="1"/>
</dbReference>
<dbReference type="Pfam" id="PF00696">
    <property type="entry name" value="AA_kinase"/>
    <property type="match status" value="1"/>
</dbReference>
<dbReference type="PIRSF" id="PIRSF005650">
    <property type="entry name" value="Uridylate_kin"/>
    <property type="match status" value="1"/>
</dbReference>
<dbReference type="SUPFAM" id="SSF53633">
    <property type="entry name" value="Carbamate kinase-like"/>
    <property type="match status" value="1"/>
</dbReference>
<accession>Q7VD61</accession>
<comment type="function">
    <text evidence="1">Catalyzes the reversible phosphorylation of UMP to UDP.</text>
</comment>
<comment type="catalytic activity">
    <reaction evidence="1">
        <text>UMP + ATP = UDP + ADP</text>
        <dbReference type="Rhea" id="RHEA:24400"/>
        <dbReference type="ChEBI" id="CHEBI:30616"/>
        <dbReference type="ChEBI" id="CHEBI:57865"/>
        <dbReference type="ChEBI" id="CHEBI:58223"/>
        <dbReference type="ChEBI" id="CHEBI:456216"/>
        <dbReference type="EC" id="2.7.4.22"/>
    </reaction>
</comment>
<comment type="activity regulation">
    <text evidence="1">Inhibited by UTP.</text>
</comment>
<comment type="pathway">
    <text evidence="1">Pyrimidine metabolism; CTP biosynthesis via de novo pathway; UDP from UMP (UMPK route): step 1/1.</text>
</comment>
<comment type="subunit">
    <text evidence="1">Homohexamer.</text>
</comment>
<comment type="subcellular location">
    <subcellularLocation>
        <location evidence="1">Cytoplasm</location>
    </subcellularLocation>
</comment>
<comment type="similarity">
    <text evidence="1">Belongs to the UMP kinase family.</text>
</comment>
<name>PYRH_PROMA</name>
<feature type="chain" id="PRO_0000323916" description="Uridylate kinase">
    <location>
        <begin position="1"/>
        <end position="237"/>
    </location>
</feature>
<feature type="binding site" evidence="1">
    <location>
        <begin position="9"/>
        <end position="12"/>
    </location>
    <ligand>
        <name>ATP</name>
        <dbReference type="ChEBI" id="CHEBI:30616"/>
    </ligand>
</feature>
<feature type="binding site" evidence="1">
    <location>
        <position position="51"/>
    </location>
    <ligand>
        <name>UMP</name>
        <dbReference type="ChEBI" id="CHEBI:57865"/>
    </ligand>
</feature>
<feature type="binding site" evidence="1">
    <location>
        <position position="52"/>
    </location>
    <ligand>
        <name>ATP</name>
        <dbReference type="ChEBI" id="CHEBI:30616"/>
    </ligand>
</feature>
<feature type="binding site" evidence="1">
    <location>
        <position position="56"/>
    </location>
    <ligand>
        <name>ATP</name>
        <dbReference type="ChEBI" id="CHEBI:30616"/>
    </ligand>
</feature>
<feature type="binding site" evidence="1">
    <location>
        <position position="71"/>
    </location>
    <ligand>
        <name>UMP</name>
        <dbReference type="ChEBI" id="CHEBI:57865"/>
    </ligand>
</feature>
<feature type="binding site" evidence="1">
    <location>
        <begin position="132"/>
        <end position="139"/>
    </location>
    <ligand>
        <name>UMP</name>
        <dbReference type="ChEBI" id="CHEBI:57865"/>
    </ligand>
</feature>
<feature type="binding site" evidence="1">
    <location>
        <position position="159"/>
    </location>
    <ligand>
        <name>ATP</name>
        <dbReference type="ChEBI" id="CHEBI:30616"/>
    </ligand>
</feature>
<feature type="binding site" evidence="1">
    <location>
        <position position="165"/>
    </location>
    <ligand>
        <name>ATP</name>
        <dbReference type="ChEBI" id="CHEBI:30616"/>
    </ligand>
</feature>
<feature type="binding site" evidence="1">
    <location>
        <position position="168"/>
    </location>
    <ligand>
        <name>ATP</name>
        <dbReference type="ChEBI" id="CHEBI:30616"/>
    </ligand>
</feature>
<gene>
    <name evidence="1" type="primary">pyrH</name>
    <name type="ordered locus">Pro_0522</name>
</gene>